<evidence type="ECO:0000250" key="1">
    <source>
        <dbReference type="UniProtKB" id="O59791"/>
    </source>
</evidence>
<evidence type="ECO:0000250" key="2">
    <source>
        <dbReference type="UniProtKB" id="Q2PGG3"/>
    </source>
</evidence>
<evidence type="ECO:0000250" key="3">
    <source>
        <dbReference type="UniProtKB" id="Q7XSN8"/>
    </source>
</evidence>
<evidence type="ECO:0000250" key="4">
    <source>
        <dbReference type="UniProtKB" id="Q9GZT4"/>
    </source>
</evidence>
<evidence type="ECO:0000250" key="5">
    <source>
        <dbReference type="UniProtKB" id="Q9QZX7"/>
    </source>
</evidence>
<evidence type="ECO:0000305" key="6"/>
<name>SRR_ORYSI</name>
<sequence length="339" mass="35597">MGSRGGSGGDGAESHGYAADIHSIREAQARIAPYVHKTPVLSSTSIDAIVGKQLFFKCECFQKAGAFKIRGASNSIFALDDDEASKGVVTHSSGNHAAAVALAAKLRGIPAYIVIPRNAPACKVDNVKRYGGHIIWSDVSIESRESVAKRVQEETGAILVHPFNNKNTISGQGTVSLELLEEVPEIDTIIVPISGGGLISGVALAAKAINPSIRILAAEPKGADDSAQSKAAGKIITLPSTNTIADGLRAFLGDLTWPVVRDLVDDIIVVDDNAIVDAMKMCYEMLKVAVEPSGAIGLAAALSDEFKQSSAWHESSKIGIIVSGGNVDLGVLWESLYKR</sequence>
<dbReference type="EC" id="5.1.1.18" evidence="3"/>
<dbReference type="EC" id="4.3.1.18" evidence="3"/>
<dbReference type="EC" id="4.3.1.17" evidence="3"/>
<dbReference type="EMBL" id="CM000129">
    <property type="protein sequence ID" value="EAY95119.1"/>
    <property type="molecule type" value="Genomic_DNA"/>
</dbReference>
<dbReference type="SMR" id="A2XWA9"/>
<dbReference type="STRING" id="39946.A2XWA9"/>
<dbReference type="EnsemblPlants" id="BGIOSGA014575-TA">
    <property type="protein sequence ID" value="BGIOSGA014575-PA"/>
    <property type="gene ID" value="BGIOSGA014575"/>
</dbReference>
<dbReference type="EnsemblPlants" id="OsGoSa_04g0022140.01">
    <property type="protein sequence ID" value="OsGoSa_04g0022140.01"/>
    <property type="gene ID" value="OsGoSa_04g0022140"/>
</dbReference>
<dbReference type="EnsemblPlants" id="OsGoSa_04g0022140.02">
    <property type="protein sequence ID" value="OsGoSa_04g0022140.02"/>
    <property type="gene ID" value="OsGoSa_04g0022140"/>
</dbReference>
<dbReference type="EnsemblPlants" id="OsIR64_04g0021720.01">
    <property type="protein sequence ID" value="OsIR64_04g0021720.01"/>
    <property type="gene ID" value="OsIR64_04g0021720"/>
</dbReference>
<dbReference type="EnsemblPlants" id="OsIR64_04g0021720.02">
    <property type="protein sequence ID" value="OsIR64_04g0021720.02"/>
    <property type="gene ID" value="OsIR64_04g0021720"/>
</dbReference>
<dbReference type="EnsemblPlants" id="OsKYG_04g0022040.01">
    <property type="protein sequence ID" value="OsKYG_04g0022040.01"/>
    <property type="gene ID" value="OsKYG_04g0022040"/>
</dbReference>
<dbReference type="EnsemblPlants" id="OsKYG_04g0022040.02">
    <property type="protein sequence ID" value="OsKYG_04g0022040.02"/>
    <property type="gene ID" value="OsKYG_04g0022040"/>
</dbReference>
<dbReference type="EnsemblPlants" id="OsLaMu_04g0022740.01">
    <property type="protein sequence ID" value="OsLaMu_04g0022740.01"/>
    <property type="gene ID" value="OsLaMu_04g0022740"/>
</dbReference>
<dbReference type="EnsemblPlants" id="OsLaMu_04g0022740.02">
    <property type="protein sequence ID" value="OsLaMu_04g0022740.02"/>
    <property type="gene ID" value="OsLaMu_04g0022740"/>
</dbReference>
<dbReference type="EnsemblPlants" id="OsLima_04g0022210.01">
    <property type="protein sequence ID" value="OsLima_04g0022210.01"/>
    <property type="gene ID" value="OsLima_04g0022210"/>
</dbReference>
<dbReference type="EnsemblPlants" id="OsLima_04g0022210.02">
    <property type="protein sequence ID" value="OsLima_04g0022210.02"/>
    <property type="gene ID" value="OsLima_04g0022210"/>
</dbReference>
<dbReference type="EnsemblPlants" id="OsLiXu_04g0022550.01">
    <property type="protein sequence ID" value="OsLiXu_04g0022550.01"/>
    <property type="gene ID" value="OsLiXu_04g0022550"/>
</dbReference>
<dbReference type="EnsemblPlants" id="OsLiXu_04g0022550.02">
    <property type="protein sequence ID" value="OsLiXu_04g0022550.02"/>
    <property type="gene ID" value="OsLiXu_04g0022550"/>
</dbReference>
<dbReference type="EnsemblPlants" id="OsMH63_04G023090_01">
    <property type="protein sequence ID" value="OsMH63_04G023090_01"/>
    <property type="gene ID" value="OsMH63_04G023090"/>
</dbReference>
<dbReference type="EnsemblPlants" id="OsMH63_04G023090_02">
    <property type="protein sequence ID" value="OsMH63_04G023090_02"/>
    <property type="gene ID" value="OsMH63_04G023090"/>
</dbReference>
<dbReference type="EnsemblPlants" id="OsMH63_04G023090_03">
    <property type="protein sequence ID" value="OsMH63_04G023090_03"/>
    <property type="gene ID" value="OsMH63_04G023090"/>
</dbReference>
<dbReference type="EnsemblPlants" id="OsMH63_04G023090_04">
    <property type="protein sequence ID" value="OsMH63_04G023090_04"/>
    <property type="gene ID" value="OsMH63_04G023090"/>
</dbReference>
<dbReference type="EnsemblPlants" id="OsPr106_04g0022880.01">
    <property type="protein sequence ID" value="OsPr106_04g0022880.01"/>
    <property type="gene ID" value="OsPr106_04g0022880"/>
</dbReference>
<dbReference type="EnsemblPlants" id="OsPr106_04g0022880.02">
    <property type="protein sequence ID" value="OsPr106_04g0022880.02"/>
    <property type="gene ID" value="OsPr106_04g0022880"/>
</dbReference>
<dbReference type="EnsemblPlants" id="OsZS97_04G023070_01">
    <property type="protein sequence ID" value="OsZS97_04G023070_01"/>
    <property type="gene ID" value="OsZS97_04G023070"/>
</dbReference>
<dbReference type="EnsemblPlants" id="OsZS97_04G023070_02">
    <property type="protein sequence ID" value="OsZS97_04G023070_02"/>
    <property type="gene ID" value="OsZS97_04G023070"/>
</dbReference>
<dbReference type="Gramene" id="BGIOSGA014575-TA">
    <property type="protein sequence ID" value="BGIOSGA014575-PA"/>
    <property type="gene ID" value="BGIOSGA014575"/>
</dbReference>
<dbReference type="Gramene" id="OsGoSa_04g0022140.01">
    <property type="protein sequence ID" value="OsGoSa_04g0022140.01"/>
    <property type="gene ID" value="OsGoSa_04g0022140"/>
</dbReference>
<dbReference type="Gramene" id="OsGoSa_04g0022140.02">
    <property type="protein sequence ID" value="OsGoSa_04g0022140.02"/>
    <property type="gene ID" value="OsGoSa_04g0022140"/>
</dbReference>
<dbReference type="Gramene" id="OsIR64_04g0021720.01">
    <property type="protein sequence ID" value="OsIR64_04g0021720.01"/>
    <property type="gene ID" value="OsIR64_04g0021720"/>
</dbReference>
<dbReference type="Gramene" id="OsIR64_04g0021720.02">
    <property type="protein sequence ID" value="OsIR64_04g0021720.02"/>
    <property type="gene ID" value="OsIR64_04g0021720"/>
</dbReference>
<dbReference type="Gramene" id="OsKYG_04g0022040.01">
    <property type="protein sequence ID" value="OsKYG_04g0022040.01"/>
    <property type="gene ID" value="OsKYG_04g0022040"/>
</dbReference>
<dbReference type="Gramene" id="OsKYG_04g0022040.02">
    <property type="protein sequence ID" value="OsKYG_04g0022040.02"/>
    <property type="gene ID" value="OsKYG_04g0022040"/>
</dbReference>
<dbReference type="Gramene" id="OsLaMu_04g0022740.01">
    <property type="protein sequence ID" value="OsLaMu_04g0022740.01"/>
    <property type="gene ID" value="OsLaMu_04g0022740"/>
</dbReference>
<dbReference type="Gramene" id="OsLaMu_04g0022740.02">
    <property type="protein sequence ID" value="OsLaMu_04g0022740.02"/>
    <property type="gene ID" value="OsLaMu_04g0022740"/>
</dbReference>
<dbReference type="Gramene" id="OsLima_04g0022210.01">
    <property type="protein sequence ID" value="OsLima_04g0022210.01"/>
    <property type="gene ID" value="OsLima_04g0022210"/>
</dbReference>
<dbReference type="Gramene" id="OsLima_04g0022210.02">
    <property type="protein sequence ID" value="OsLima_04g0022210.02"/>
    <property type="gene ID" value="OsLima_04g0022210"/>
</dbReference>
<dbReference type="Gramene" id="OsLiXu_04g0022550.01">
    <property type="protein sequence ID" value="OsLiXu_04g0022550.01"/>
    <property type="gene ID" value="OsLiXu_04g0022550"/>
</dbReference>
<dbReference type="Gramene" id="OsLiXu_04g0022550.02">
    <property type="protein sequence ID" value="OsLiXu_04g0022550.02"/>
    <property type="gene ID" value="OsLiXu_04g0022550"/>
</dbReference>
<dbReference type="Gramene" id="OsMH63_04G023090_01">
    <property type="protein sequence ID" value="OsMH63_04G023090_01"/>
    <property type="gene ID" value="OsMH63_04G023090"/>
</dbReference>
<dbReference type="Gramene" id="OsMH63_04G023090_02">
    <property type="protein sequence ID" value="OsMH63_04G023090_02"/>
    <property type="gene ID" value="OsMH63_04G023090"/>
</dbReference>
<dbReference type="Gramene" id="OsMH63_04G023090_03">
    <property type="protein sequence ID" value="OsMH63_04G023090_03"/>
    <property type="gene ID" value="OsMH63_04G023090"/>
</dbReference>
<dbReference type="Gramene" id="OsMH63_04G023090_04">
    <property type="protein sequence ID" value="OsMH63_04G023090_04"/>
    <property type="gene ID" value="OsMH63_04G023090"/>
</dbReference>
<dbReference type="Gramene" id="OsPr106_04g0022880.01">
    <property type="protein sequence ID" value="OsPr106_04g0022880.01"/>
    <property type="gene ID" value="OsPr106_04g0022880"/>
</dbReference>
<dbReference type="Gramene" id="OsPr106_04g0022880.02">
    <property type="protein sequence ID" value="OsPr106_04g0022880.02"/>
    <property type="gene ID" value="OsPr106_04g0022880"/>
</dbReference>
<dbReference type="Gramene" id="OsZS97_04G023070_01">
    <property type="protein sequence ID" value="OsZS97_04G023070_01"/>
    <property type="gene ID" value="OsZS97_04G023070"/>
</dbReference>
<dbReference type="Gramene" id="OsZS97_04G023070_02">
    <property type="protein sequence ID" value="OsZS97_04G023070_02"/>
    <property type="gene ID" value="OsZS97_04G023070"/>
</dbReference>
<dbReference type="HOGENOM" id="CLU_021152_4_2_1"/>
<dbReference type="OMA" id="LIHPFDH"/>
<dbReference type="OrthoDB" id="4418812at2759"/>
<dbReference type="Proteomes" id="UP000007015">
    <property type="component" value="Chromosome 4"/>
</dbReference>
<dbReference type="GO" id="GO:0005524">
    <property type="term" value="F:ATP binding"/>
    <property type="evidence" value="ECO:0007669"/>
    <property type="project" value="UniProtKB-KW"/>
</dbReference>
<dbReference type="GO" id="GO:0008721">
    <property type="term" value="F:D-serine ammonia-lyase activity"/>
    <property type="evidence" value="ECO:0007669"/>
    <property type="project" value="UniProtKB-EC"/>
</dbReference>
<dbReference type="GO" id="GO:0003941">
    <property type="term" value="F:L-serine ammonia-lyase activity"/>
    <property type="evidence" value="ECO:0007669"/>
    <property type="project" value="UniProtKB-EC"/>
</dbReference>
<dbReference type="GO" id="GO:0000287">
    <property type="term" value="F:magnesium ion binding"/>
    <property type="evidence" value="ECO:0007669"/>
    <property type="project" value="TreeGrafter"/>
</dbReference>
<dbReference type="GO" id="GO:0030170">
    <property type="term" value="F:pyridoxal phosphate binding"/>
    <property type="evidence" value="ECO:0007669"/>
    <property type="project" value="TreeGrafter"/>
</dbReference>
<dbReference type="GO" id="GO:0030378">
    <property type="term" value="F:serine racemase activity"/>
    <property type="evidence" value="ECO:0007669"/>
    <property type="project" value="UniProtKB-EC"/>
</dbReference>
<dbReference type="GO" id="GO:0018114">
    <property type="term" value="F:threonine racemase activity"/>
    <property type="evidence" value="ECO:0007669"/>
    <property type="project" value="TreeGrafter"/>
</dbReference>
<dbReference type="GO" id="GO:0070179">
    <property type="term" value="P:D-serine biosynthetic process"/>
    <property type="evidence" value="ECO:0007669"/>
    <property type="project" value="TreeGrafter"/>
</dbReference>
<dbReference type="GO" id="GO:0006563">
    <property type="term" value="P:L-serine metabolic process"/>
    <property type="evidence" value="ECO:0007669"/>
    <property type="project" value="EnsemblPlants"/>
</dbReference>
<dbReference type="CDD" id="cd01562">
    <property type="entry name" value="Thr-dehyd"/>
    <property type="match status" value="1"/>
</dbReference>
<dbReference type="FunFam" id="3.40.50.1100:FF:000007">
    <property type="entry name" value="L-threonine dehydratase catabolic TdcB"/>
    <property type="match status" value="1"/>
</dbReference>
<dbReference type="FunFam" id="3.40.50.1100:FF:000005">
    <property type="entry name" value="Threonine dehydratase catabolic"/>
    <property type="match status" value="1"/>
</dbReference>
<dbReference type="Gene3D" id="3.40.50.1100">
    <property type="match status" value="2"/>
</dbReference>
<dbReference type="InterPro" id="IPR001926">
    <property type="entry name" value="TrpB-like_PALP"/>
</dbReference>
<dbReference type="InterPro" id="IPR036052">
    <property type="entry name" value="TrpB-like_PALP_sf"/>
</dbReference>
<dbReference type="PANTHER" id="PTHR43050">
    <property type="entry name" value="SERINE / THREONINE RACEMASE FAMILY MEMBER"/>
    <property type="match status" value="1"/>
</dbReference>
<dbReference type="PANTHER" id="PTHR43050:SF1">
    <property type="entry name" value="SERINE RACEMASE"/>
    <property type="match status" value="1"/>
</dbReference>
<dbReference type="Pfam" id="PF00291">
    <property type="entry name" value="PALP"/>
    <property type="match status" value="1"/>
</dbReference>
<dbReference type="SUPFAM" id="SSF53686">
    <property type="entry name" value="Tryptophan synthase beta subunit-like PLP-dependent enzymes"/>
    <property type="match status" value="1"/>
</dbReference>
<proteinExistence type="inferred from homology"/>
<accession>A2XWA9</accession>
<comment type="function">
    <text evidence="2">Catalyzes the synthesis of D-serine from L-serine. Has dehydratase activity towards both L-serine and D-serine.</text>
</comment>
<comment type="catalytic activity">
    <reaction evidence="2">
        <text>L-serine = D-serine</text>
        <dbReference type="Rhea" id="RHEA:10980"/>
        <dbReference type="ChEBI" id="CHEBI:33384"/>
        <dbReference type="ChEBI" id="CHEBI:35247"/>
        <dbReference type="EC" id="5.1.1.18"/>
    </reaction>
</comment>
<comment type="catalytic activity">
    <reaction evidence="2">
        <text>L-serine = pyruvate + NH4(+)</text>
        <dbReference type="Rhea" id="RHEA:19169"/>
        <dbReference type="ChEBI" id="CHEBI:15361"/>
        <dbReference type="ChEBI" id="CHEBI:28938"/>
        <dbReference type="ChEBI" id="CHEBI:33384"/>
        <dbReference type="EC" id="4.3.1.17"/>
    </reaction>
</comment>
<comment type="catalytic activity">
    <reaction evidence="2">
        <text>D-serine = pyruvate + NH4(+)</text>
        <dbReference type="Rhea" id="RHEA:13977"/>
        <dbReference type="ChEBI" id="CHEBI:15361"/>
        <dbReference type="ChEBI" id="CHEBI:28938"/>
        <dbReference type="ChEBI" id="CHEBI:35247"/>
        <dbReference type="EC" id="4.3.1.18"/>
    </reaction>
</comment>
<comment type="cofactor">
    <cofactor evidence="4">
        <name>Mg(2+)</name>
        <dbReference type="ChEBI" id="CHEBI:18420"/>
    </cofactor>
    <cofactor evidence="4">
        <name>Mn(2+)</name>
        <dbReference type="ChEBI" id="CHEBI:29035"/>
    </cofactor>
    <cofactor evidence="4">
        <name>Ca(2+)</name>
        <dbReference type="ChEBI" id="CHEBI:29108"/>
    </cofactor>
</comment>
<comment type="cofactor">
    <cofactor evidence="2">
        <name>pyridoxal 5'-phosphate</name>
        <dbReference type="ChEBI" id="CHEBI:597326"/>
    </cofactor>
</comment>
<comment type="similarity">
    <text evidence="6">Belongs to the serine/threonine dehydratase family.</text>
</comment>
<reference key="1">
    <citation type="journal article" date="2005" name="PLoS Biol.">
        <title>The genomes of Oryza sativa: a history of duplications.</title>
        <authorList>
            <person name="Yu J."/>
            <person name="Wang J."/>
            <person name="Lin W."/>
            <person name="Li S."/>
            <person name="Li H."/>
            <person name="Zhou J."/>
            <person name="Ni P."/>
            <person name="Dong W."/>
            <person name="Hu S."/>
            <person name="Zeng C."/>
            <person name="Zhang J."/>
            <person name="Zhang Y."/>
            <person name="Li R."/>
            <person name="Xu Z."/>
            <person name="Li S."/>
            <person name="Li X."/>
            <person name="Zheng H."/>
            <person name="Cong L."/>
            <person name="Lin L."/>
            <person name="Yin J."/>
            <person name="Geng J."/>
            <person name="Li G."/>
            <person name="Shi J."/>
            <person name="Liu J."/>
            <person name="Lv H."/>
            <person name="Li J."/>
            <person name="Wang J."/>
            <person name="Deng Y."/>
            <person name="Ran L."/>
            <person name="Shi X."/>
            <person name="Wang X."/>
            <person name="Wu Q."/>
            <person name="Li C."/>
            <person name="Ren X."/>
            <person name="Wang J."/>
            <person name="Wang X."/>
            <person name="Li D."/>
            <person name="Liu D."/>
            <person name="Zhang X."/>
            <person name="Ji Z."/>
            <person name="Zhao W."/>
            <person name="Sun Y."/>
            <person name="Zhang Z."/>
            <person name="Bao J."/>
            <person name="Han Y."/>
            <person name="Dong L."/>
            <person name="Ji J."/>
            <person name="Chen P."/>
            <person name="Wu S."/>
            <person name="Liu J."/>
            <person name="Xiao Y."/>
            <person name="Bu D."/>
            <person name="Tan J."/>
            <person name="Yang L."/>
            <person name="Ye C."/>
            <person name="Zhang J."/>
            <person name="Xu J."/>
            <person name="Zhou Y."/>
            <person name="Yu Y."/>
            <person name="Zhang B."/>
            <person name="Zhuang S."/>
            <person name="Wei H."/>
            <person name="Liu B."/>
            <person name="Lei M."/>
            <person name="Yu H."/>
            <person name="Li Y."/>
            <person name="Xu H."/>
            <person name="Wei S."/>
            <person name="He X."/>
            <person name="Fang L."/>
            <person name="Zhang Z."/>
            <person name="Zhang Y."/>
            <person name="Huang X."/>
            <person name="Su Z."/>
            <person name="Tong W."/>
            <person name="Li J."/>
            <person name="Tong Z."/>
            <person name="Li S."/>
            <person name="Ye J."/>
            <person name="Wang L."/>
            <person name="Fang L."/>
            <person name="Lei T."/>
            <person name="Chen C.-S."/>
            <person name="Chen H.-C."/>
            <person name="Xu Z."/>
            <person name="Li H."/>
            <person name="Huang H."/>
            <person name="Zhang F."/>
            <person name="Xu H."/>
            <person name="Li N."/>
            <person name="Zhao C."/>
            <person name="Li S."/>
            <person name="Dong L."/>
            <person name="Huang Y."/>
            <person name="Li L."/>
            <person name="Xi Y."/>
            <person name="Qi Q."/>
            <person name="Li W."/>
            <person name="Zhang B."/>
            <person name="Hu W."/>
            <person name="Zhang Y."/>
            <person name="Tian X."/>
            <person name="Jiao Y."/>
            <person name="Liang X."/>
            <person name="Jin J."/>
            <person name="Gao L."/>
            <person name="Zheng W."/>
            <person name="Hao B."/>
            <person name="Liu S.-M."/>
            <person name="Wang W."/>
            <person name="Yuan L."/>
            <person name="Cao M."/>
            <person name="McDermott J."/>
            <person name="Samudrala R."/>
            <person name="Wang J."/>
            <person name="Wong G.K.-S."/>
            <person name="Yang H."/>
        </authorList>
    </citation>
    <scope>NUCLEOTIDE SEQUENCE [LARGE SCALE GENOMIC DNA]</scope>
    <source>
        <strain>cv. 93-11</strain>
    </source>
</reference>
<gene>
    <name type="ORF">OsI_16936</name>
</gene>
<feature type="chain" id="PRO_0000420347" description="Serine racemase">
    <location>
        <begin position="1"/>
        <end position="339"/>
    </location>
</feature>
<feature type="active site" description="Proton acceptor" evidence="1">
    <location>
        <position position="68"/>
    </location>
</feature>
<feature type="active site" description="Proton acceptor" evidence="1">
    <location>
        <position position="93"/>
    </location>
</feature>
<feature type="binding site" evidence="4">
    <location>
        <position position="43"/>
    </location>
    <ligand>
        <name>ATP</name>
        <dbReference type="ChEBI" id="CHEBI:30616"/>
    </ligand>
</feature>
<feature type="binding site" evidence="4">
    <location>
        <position position="63"/>
    </location>
    <ligand>
        <name>ATP</name>
        <dbReference type="ChEBI" id="CHEBI:30616"/>
    </ligand>
</feature>
<feature type="binding site" evidence="4">
    <location>
        <position position="90"/>
    </location>
    <ligand>
        <name>Ca(2+)</name>
        <dbReference type="ChEBI" id="CHEBI:29108"/>
        <label>1</label>
    </ligand>
</feature>
<feature type="binding site" evidence="4">
    <location>
        <position position="95"/>
    </location>
    <ligand>
        <name>pyridoxal 5'-phosphate</name>
        <dbReference type="ChEBI" id="CHEBI:597326"/>
    </ligand>
</feature>
<feature type="binding site" evidence="4">
    <location>
        <position position="130"/>
    </location>
    <ligand>
        <name>ATP</name>
        <dbReference type="ChEBI" id="CHEBI:30616"/>
    </ligand>
</feature>
<feature type="binding site" evidence="4">
    <location>
        <position position="187"/>
    </location>
    <ligand>
        <name>Mg(2+)</name>
        <dbReference type="ChEBI" id="CHEBI:18420"/>
        <label>1</label>
    </ligand>
</feature>
<feature type="binding site" evidence="4">
    <location>
        <position position="195"/>
    </location>
    <ligand>
        <name>pyridoxal 5'-phosphate</name>
        <dbReference type="ChEBI" id="CHEBI:597326"/>
    </ligand>
</feature>
<feature type="binding site" evidence="4">
    <location>
        <position position="196"/>
    </location>
    <ligand>
        <name>pyridoxal 5'-phosphate</name>
        <dbReference type="ChEBI" id="CHEBI:597326"/>
    </ligand>
</feature>
<feature type="binding site" evidence="4">
    <location>
        <position position="197"/>
    </location>
    <ligand>
        <name>pyridoxal 5'-phosphate</name>
        <dbReference type="ChEBI" id="CHEBI:597326"/>
    </ligand>
</feature>
<feature type="binding site" evidence="4">
    <location>
        <position position="219"/>
    </location>
    <ligand>
        <name>Ca(2+)</name>
        <dbReference type="ChEBI" id="CHEBI:29108"/>
        <label>2</label>
    </ligand>
</feature>
<feature type="binding site" evidence="4">
    <location>
        <position position="219"/>
    </location>
    <ligand>
        <name>Mg(2+)</name>
        <dbReference type="ChEBI" id="CHEBI:18420"/>
        <label>2</label>
    </ligand>
</feature>
<feature type="binding site" evidence="4">
    <location>
        <position position="219"/>
    </location>
    <ligand>
        <name>Mn(2+)</name>
        <dbReference type="ChEBI" id="CHEBI:29035"/>
    </ligand>
</feature>
<feature type="binding site" evidence="4">
    <location>
        <position position="223"/>
    </location>
    <ligand>
        <name>Ca(2+)</name>
        <dbReference type="ChEBI" id="CHEBI:29108"/>
        <label>2</label>
    </ligand>
</feature>
<feature type="binding site" evidence="4">
    <location>
        <position position="223"/>
    </location>
    <ligand>
        <name>Mg(2+)</name>
        <dbReference type="ChEBI" id="CHEBI:18420"/>
        <label>2</label>
    </ligand>
</feature>
<feature type="binding site" evidence="4">
    <location>
        <position position="223"/>
    </location>
    <ligand>
        <name>Mn(2+)</name>
        <dbReference type="ChEBI" id="CHEBI:29035"/>
    </ligand>
</feature>
<feature type="binding site" evidence="4">
    <location>
        <position position="225"/>
    </location>
    <ligand>
        <name>Ca(2+)</name>
        <dbReference type="ChEBI" id="CHEBI:29108"/>
        <label>2</label>
    </ligand>
</feature>
<feature type="binding site" evidence="4">
    <location>
        <position position="225"/>
    </location>
    <ligand>
        <name>Mg(2+)</name>
        <dbReference type="ChEBI" id="CHEBI:18420"/>
        <label>2</label>
    </ligand>
</feature>
<feature type="binding site" evidence="4">
    <location>
        <position position="225"/>
    </location>
    <ligand>
        <name>Mn(2+)</name>
        <dbReference type="ChEBI" id="CHEBI:29035"/>
    </ligand>
</feature>
<feature type="binding site" evidence="4">
    <location>
        <position position="287"/>
    </location>
    <ligand>
        <name>ATP</name>
        <dbReference type="ChEBI" id="CHEBI:30616"/>
    </ligand>
</feature>
<feature type="binding site" evidence="4">
    <location>
        <position position="323"/>
    </location>
    <ligand>
        <name>pyridoxal 5'-phosphate</name>
        <dbReference type="ChEBI" id="CHEBI:597326"/>
    </ligand>
</feature>
<feature type="binding site" evidence="4">
    <location>
        <position position="326"/>
    </location>
    <ligand>
        <name>ATP</name>
        <dbReference type="ChEBI" id="CHEBI:30616"/>
    </ligand>
</feature>
<feature type="modified residue" description="N6-(pyridoxal phosphate)lysine" evidence="4">
    <location>
        <position position="68"/>
    </location>
</feature>
<feature type="modified residue" description="S-nitrosocysteine" evidence="5">
    <location>
        <position position="122"/>
    </location>
</feature>
<organism>
    <name type="scientific">Oryza sativa subsp. indica</name>
    <name type="common">Rice</name>
    <dbReference type="NCBI Taxonomy" id="39946"/>
    <lineage>
        <taxon>Eukaryota</taxon>
        <taxon>Viridiplantae</taxon>
        <taxon>Streptophyta</taxon>
        <taxon>Embryophyta</taxon>
        <taxon>Tracheophyta</taxon>
        <taxon>Spermatophyta</taxon>
        <taxon>Magnoliopsida</taxon>
        <taxon>Liliopsida</taxon>
        <taxon>Poales</taxon>
        <taxon>Poaceae</taxon>
        <taxon>BOP clade</taxon>
        <taxon>Oryzoideae</taxon>
        <taxon>Oryzeae</taxon>
        <taxon>Oryzinae</taxon>
        <taxon>Oryza</taxon>
        <taxon>Oryza sativa</taxon>
    </lineage>
</organism>
<protein>
    <recommendedName>
        <fullName>Serine racemase</fullName>
        <ecNumber evidence="3">5.1.1.18</ecNumber>
    </recommendedName>
    <alternativeName>
        <fullName>D-serine ammonia-lyase</fullName>
    </alternativeName>
    <alternativeName>
        <fullName>D-serine dehydratase</fullName>
        <ecNumber evidence="3">4.3.1.18</ecNumber>
    </alternativeName>
    <alternativeName>
        <fullName>L-serine ammonia-lyase</fullName>
    </alternativeName>
    <alternativeName>
        <fullName>L-serine dehydratase</fullName>
        <ecNumber evidence="3">4.3.1.17</ecNumber>
    </alternativeName>
</protein>
<keyword id="KW-0021">Allosteric enzyme</keyword>
<keyword id="KW-0067">ATP-binding</keyword>
<keyword id="KW-0106">Calcium</keyword>
<keyword id="KW-0413">Isomerase</keyword>
<keyword id="KW-0456">Lyase</keyword>
<keyword id="KW-0460">Magnesium</keyword>
<keyword id="KW-0464">Manganese</keyword>
<keyword id="KW-0479">Metal-binding</keyword>
<keyword id="KW-0547">Nucleotide-binding</keyword>
<keyword id="KW-0663">Pyridoxal phosphate</keyword>
<keyword id="KW-1185">Reference proteome</keyword>
<keyword id="KW-0702">S-nitrosylation</keyword>